<evidence type="ECO:0000250" key="1"/>
<evidence type="ECO:0000250" key="2">
    <source>
        <dbReference type="UniProtKB" id="P00157"/>
    </source>
</evidence>
<evidence type="ECO:0000255" key="3">
    <source>
        <dbReference type="PROSITE-ProRule" id="PRU00967"/>
    </source>
</evidence>
<evidence type="ECO:0000255" key="4">
    <source>
        <dbReference type="PROSITE-ProRule" id="PRU00968"/>
    </source>
</evidence>
<dbReference type="EMBL" id="AY926398">
    <property type="protein sequence ID" value="AAY23241.1"/>
    <property type="molecule type" value="Genomic_DNA"/>
</dbReference>
<dbReference type="SMR" id="Q508K5"/>
<dbReference type="GO" id="GO:0005743">
    <property type="term" value="C:mitochondrial inner membrane"/>
    <property type="evidence" value="ECO:0007669"/>
    <property type="project" value="UniProtKB-SubCell"/>
</dbReference>
<dbReference type="GO" id="GO:0045275">
    <property type="term" value="C:respiratory chain complex III"/>
    <property type="evidence" value="ECO:0007669"/>
    <property type="project" value="InterPro"/>
</dbReference>
<dbReference type="GO" id="GO:0046872">
    <property type="term" value="F:metal ion binding"/>
    <property type="evidence" value="ECO:0007669"/>
    <property type="project" value="UniProtKB-KW"/>
</dbReference>
<dbReference type="GO" id="GO:0008121">
    <property type="term" value="F:ubiquinol-cytochrome-c reductase activity"/>
    <property type="evidence" value="ECO:0007669"/>
    <property type="project" value="InterPro"/>
</dbReference>
<dbReference type="GO" id="GO:0006122">
    <property type="term" value="P:mitochondrial electron transport, ubiquinol to cytochrome c"/>
    <property type="evidence" value="ECO:0007669"/>
    <property type="project" value="TreeGrafter"/>
</dbReference>
<dbReference type="CDD" id="cd00290">
    <property type="entry name" value="cytochrome_b_C"/>
    <property type="match status" value="1"/>
</dbReference>
<dbReference type="CDD" id="cd00284">
    <property type="entry name" value="Cytochrome_b_N"/>
    <property type="match status" value="1"/>
</dbReference>
<dbReference type="FunFam" id="1.20.810.10:FF:000002">
    <property type="entry name" value="Cytochrome b"/>
    <property type="match status" value="1"/>
</dbReference>
<dbReference type="Gene3D" id="1.20.810.10">
    <property type="entry name" value="Cytochrome Bc1 Complex, Chain C"/>
    <property type="match status" value="1"/>
</dbReference>
<dbReference type="InterPro" id="IPR005798">
    <property type="entry name" value="Cyt_b/b6_C"/>
</dbReference>
<dbReference type="InterPro" id="IPR036150">
    <property type="entry name" value="Cyt_b/b6_C_sf"/>
</dbReference>
<dbReference type="InterPro" id="IPR005797">
    <property type="entry name" value="Cyt_b/b6_N"/>
</dbReference>
<dbReference type="InterPro" id="IPR027387">
    <property type="entry name" value="Cytb/b6-like_sf"/>
</dbReference>
<dbReference type="InterPro" id="IPR030689">
    <property type="entry name" value="Cytochrome_b"/>
</dbReference>
<dbReference type="InterPro" id="IPR048260">
    <property type="entry name" value="Cytochrome_b_C_euk/bac"/>
</dbReference>
<dbReference type="InterPro" id="IPR048259">
    <property type="entry name" value="Cytochrome_b_N_euk/bac"/>
</dbReference>
<dbReference type="InterPro" id="IPR016174">
    <property type="entry name" value="Di-haem_cyt_TM"/>
</dbReference>
<dbReference type="PANTHER" id="PTHR19271">
    <property type="entry name" value="CYTOCHROME B"/>
    <property type="match status" value="1"/>
</dbReference>
<dbReference type="PANTHER" id="PTHR19271:SF16">
    <property type="entry name" value="CYTOCHROME B"/>
    <property type="match status" value="1"/>
</dbReference>
<dbReference type="Pfam" id="PF00032">
    <property type="entry name" value="Cytochrom_B_C"/>
    <property type="match status" value="1"/>
</dbReference>
<dbReference type="Pfam" id="PF00033">
    <property type="entry name" value="Cytochrome_B"/>
    <property type="match status" value="1"/>
</dbReference>
<dbReference type="PIRSF" id="PIRSF038885">
    <property type="entry name" value="COB"/>
    <property type="match status" value="1"/>
</dbReference>
<dbReference type="SUPFAM" id="SSF81648">
    <property type="entry name" value="a domain/subunit of cytochrome bc1 complex (Ubiquinol-cytochrome c reductase)"/>
    <property type="match status" value="1"/>
</dbReference>
<dbReference type="SUPFAM" id="SSF81342">
    <property type="entry name" value="Transmembrane di-heme cytochromes"/>
    <property type="match status" value="1"/>
</dbReference>
<dbReference type="PROSITE" id="PS51003">
    <property type="entry name" value="CYTB_CTER"/>
    <property type="match status" value="1"/>
</dbReference>
<dbReference type="PROSITE" id="PS51002">
    <property type="entry name" value="CYTB_NTER"/>
    <property type="match status" value="1"/>
</dbReference>
<accession>Q508K5</accession>
<protein>
    <recommendedName>
        <fullName>Cytochrome b</fullName>
    </recommendedName>
    <alternativeName>
        <fullName>Complex III subunit 3</fullName>
    </alternativeName>
    <alternativeName>
        <fullName>Complex III subunit III</fullName>
    </alternativeName>
    <alternativeName>
        <fullName>Cytochrome b-c1 complex subunit 3</fullName>
    </alternativeName>
    <alternativeName>
        <fullName>Ubiquinol-cytochrome-c reductase complex cytochrome b subunit</fullName>
    </alternativeName>
</protein>
<name>CYB_CHASU</name>
<gene>
    <name type="primary">MT-CYB</name>
    <name type="synonym">COB</name>
    <name type="synonym">CYTB</name>
    <name type="synonym">MTCYB</name>
</gene>
<proteinExistence type="inferred from homology"/>
<reference key="1">
    <citation type="journal article" date="2005" name="J. Mammal.">
        <title>Phylogenetics of the new world rodent family Heteromyidae.</title>
        <authorList>
            <person name="Alexander L.F."/>
            <person name="Riddle B.R."/>
        </authorList>
    </citation>
    <scope>NUCLEOTIDE SEQUENCE [GENOMIC DNA]</scope>
    <source>
        <strain>Isolate LVT 2119</strain>
    </source>
</reference>
<organism>
    <name type="scientific">Chaetodipus spinatus</name>
    <name type="common">Spiny pocket mouse</name>
    <dbReference type="NCBI Taxonomy" id="145413"/>
    <lineage>
        <taxon>Eukaryota</taxon>
        <taxon>Metazoa</taxon>
        <taxon>Chordata</taxon>
        <taxon>Craniata</taxon>
        <taxon>Vertebrata</taxon>
        <taxon>Euteleostomi</taxon>
        <taxon>Mammalia</taxon>
        <taxon>Eutheria</taxon>
        <taxon>Euarchontoglires</taxon>
        <taxon>Glires</taxon>
        <taxon>Rodentia</taxon>
        <taxon>Castorimorpha</taxon>
        <taxon>Heteromyidae</taxon>
        <taxon>Perognathinae</taxon>
        <taxon>Chaetodipus</taxon>
    </lineage>
</organism>
<feature type="chain" id="PRO_0000255003" description="Cytochrome b">
    <location>
        <begin position="1"/>
        <end position="379"/>
    </location>
</feature>
<feature type="transmembrane region" description="Helical" evidence="2">
    <location>
        <begin position="33"/>
        <end position="53"/>
    </location>
</feature>
<feature type="transmembrane region" description="Helical" evidence="2">
    <location>
        <begin position="77"/>
        <end position="98"/>
    </location>
</feature>
<feature type="transmembrane region" description="Helical" evidence="2">
    <location>
        <begin position="113"/>
        <end position="133"/>
    </location>
</feature>
<feature type="transmembrane region" description="Helical" evidence="2">
    <location>
        <begin position="178"/>
        <end position="198"/>
    </location>
</feature>
<feature type="transmembrane region" description="Helical" evidence="2">
    <location>
        <begin position="226"/>
        <end position="246"/>
    </location>
</feature>
<feature type="transmembrane region" description="Helical" evidence="2">
    <location>
        <begin position="288"/>
        <end position="308"/>
    </location>
</feature>
<feature type="transmembrane region" description="Helical" evidence="2">
    <location>
        <begin position="320"/>
        <end position="340"/>
    </location>
</feature>
<feature type="transmembrane region" description="Helical" evidence="2">
    <location>
        <begin position="347"/>
        <end position="367"/>
    </location>
</feature>
<feature type="binding site" description="axial binding residue" evidence="2">
    <location>
        <position position="83"/>
    </location>
    <ligand>
        <name>heme b</name>
        <dbReference type="ChEBI" id="CHEBI:60344"/>
        <label>b562</label>
    </ligand>
    <ligandPart>
        <name>Fe</name>
        <dbReference type="ChEBI" id="CHEBI:18248"/>
    </ligandPart>
</feature>
<feature type="binding site" description="axial binding residue" evidence="2">
    <location>
        <position position="97"/>
    </location>
    <ligand>
        <name>heme b</name>
        <dbReference type="ChEBI" id="CHEBI:60344"/>
        <label>b566</label>
    </ligand>
    <ligandPart>
        <name>Fe</name>
        <dbReference type="ChEBI" id="CHEBI:18248"/>
    </ligandPart>
</feature>
<feature type="binding site" description="axial binding residue" evidence="2">
    <location>
        <position position="182"/>
    </location>
    <ligand>
        <name>heme b</name>
        <dbReference type="ChEBI" id="CHEBI:60344"/>
        <label>b562</label>
    </ligand>
    <ligandPart>
        <name>Fe</name>
        <dbReference type="ChEBI" id="CHEBI:18248"/>
    </ligandPart>
</feature>
<feature type="binding site" description="axial binding residue" evidence="2">
    <location>
        <position position="196"/>
    </location>
    <ligand>
        <name>heme b</name>
        <dbReference type="ChEBI" id="CHEBI:60344"/>
        <label>b566</label>
    </ligand>
    <ligandPart>
        <name>Fe</name>
        <dbReference type="ChEBI" id="CHEBI:18248"/>
    </ligandPart>
</feature>
<feature type="binding site" evidence="2">
    <location>
        <position position="201"/>
    </location>
    <ligand>
        <name>a ubiquinone</name>
        <dbReference type="ChEBI" id="CHEBI:16389"/>
    </ligand>
</feature>
<sequence length="379" mass="42599">MTIIRKSHPLMKMVNHAFIDLPAPSNISSWWNFGSLLGLCLIIQIASGLFLAMHYTADTASAFSSVAHICRDVNYGWLIRYIHANGASLFFICLYLHIGRGIYYGSYMYKETWNVGIILLFLTMATAFMGYVLPWGQMSFWGATVITNLLSAIPYVGTGLVEWIWGGFSVDKATLTRFFAFHFILPFIIAATAMVHLLFLHETGSNNPLGIPSDSDKIPFHPYYTIKDLLGVFIILASFLTFVLFFPDLLGDPDNYSPANPLNTPPHIKPEWYFLFAYAILRSIPNKLGGVIALVLSILVLAFFPLLHTANQRSMMFRPISQLLFWTLVSDLFILTWIGGQPVEPPFIIIGQVASILYFSIILVLLPVAGLIENKILKW</sequence>
<comment type="function">
    <text evidence="2">Component of the ubiquinol-cytochrome c reductase complex (complex III or cytochrome b-c1 complex) that is part of the mitochondrial respiratory chain. The b-c1 complex mediates electron transfer from ubiquinol to cytochrome c. Contributes to the generation of a proton gradient across the mitochondrial membrane that is then used for ATP synthesis.</text>
</comment>
<comment type="cofactor">
    <cofactor evidence="2">
        <name>heme b</name>
        <dbReference type="ChEBI" id="CHEBI:60344"/>
    </cofactor>
    <text evidence="2">Binds 2 heme b groups non-covalently.</text>
</comment>
<comment type="subunit">
    <text evidence="2">The cytochrome bc1 complex contains 11 subunits: 3 respiratory subunits (MT-CYB, CYC1 and UQCRFS1), 2 core proteins (UQCRC1 and UQCRC2) and 6 low-molecular weight proteins (UQCRH/QCR6, UQCRB/QCR7, UQCRQ/QCR8, UQCR10/QCR9, UQCR11/QCR10 and a cleavage product of UQCRFS1). This cytochrome bc1 complex then forms a dimer.</text>
</comment>
<comment type="subcellular location">
    <subcellularLocation>
        <location evidence="2">Mitochondrion inner membrane</location>
        <topology evidence="2">Multi-pass membrane protein</topology>
    </subcellularLocation>
</comment>
<comment type="miscellaneous">
    <text evidence="1">Heme 1 (or BL or b562) is low-potential and absorbs at about 562 nm, and heme 2 (or BH or b566) is high-potential and absorbs at about 566 nm.</text>
</comment>
<comment type="similarity">
    <text evidence="3 4">Belongs to the cytochrome b family.</text>
</comment>
<comment type="caution">
    <text evidence="2">The full-length protein contains only eight transmembrane helices, not nine as predicted by bioinformatics tools.</text>
</comment>
<keyword id="KW-0249">Electron transport</keyword>
<keyword id="KW-0349">Heme</keyword>
<keyword id="KW-0408">Iron</keyword>
<keyword id="KW-0472">Membrane</keyword>
<keyword id="KW-0479">Metal-binding</keyword>
<keyword id="KW-0496">Mitochondrion</keyword>
<keyword id="KW-0999">Mitochondrion inner membrane</keyword>
<keyword id="KW-0679">Respiratory chain</keyword>
<keyword id="KW-0812">Transmembrane</keyword>
<keyword id="KW-1133">Transmembrane helix</keyword>
<keyword id="KW-0813">Transport</keyword>
<keyword id="KW-0830">Ubiquinone</keyword>
<geneLocation type="mitochondrion"/>